<protein>
    <recommendedName>
        <fullName>Protoporphyrinogen oxidase, chloroplastic</fullName>
        <shortName>PPO</shortName>
        <ecNumber>1.3.3.4</ecNumber>
    </recommendedName>
    <alternativeName>
        <fullName>Protoporphyrinogen oxidase 1</fullName>
    </alternativeName>
</protein>
<gene>
    <name type="primary">PPOX1</name>
    <name type="ordered locus">Os01g0286600</name>
    <name type="ordered locus">LOC_Os01g18320</name>
    <name type="ORF">P0498A12.42</name>
</gene>
<organism>
    <name type="scientific">Oryza sativa subsp. japonica</name>
    <name type="common">Rice</name>
    <dbReference type="NCBI Taxonomy" id="39947"/>
    <lineage>
        <taxon>Eukaryota</taxon>
        <taxon>Viridiplantae</taxon>
        <taxon>Streptophyta</taxon>
        <taxon>Embryophyta</taxon>
        <taxon>Tracheophyta</taxon>
        <taxon>Spermatophyta</taxon>
        <taxon>Magnoliopsida</taxon>
        <taxon>Liliopsida</taxon>
        <taxon>Poales</taxon>
        <taxon>Poaceae</taxon>
        <taxon>BOP clade</taxon>
        <taxon>Oryzoideae</taxon>
        <taxon>Oryzeae</taxon>
        <taxon>Oryzinae</taxon>
        <taxon>Oryza</taxon>
        <taxon>Oryza sativa</taxon>
    </lineage>
</organism>
<dbReference type="EC" id="1.3.3.4"/>
<dbReference type="EMBL" id="AB057749">
    <property type="protein sequence ID" value="BAB39744.1"/>
    <property type="molecule type" value="mRNA"/>
</dbReference>
<dbReference type="EMBL" id="AB057771">
    <property type="protein sequence ID" value="BAB39760.1"/>
    <property type="molecule type" value="Genomic_DNA"/>
</dbReference>
<dbReference type="EMBL" id="AP003020">
    <property type="protein sequence ID" value="BAD81569.1"/>
    <property type="status" value="ALT_SEQ"/>
    <property type="molecule type" value="Genomic_DNA"/>
</dbReference>
<dbReference type="EMBL" id="AP008207">
    <property type="protein sequence ID" value="BAF04691.1"/>
    <property type="molecule type" value="Genomic_DNA"/>
</dbReference>
<dbReference type="EMBL" id="AP014957">
    <property type="protein sequence ID" value="BAS71632.1"/>
    <property type="molecule type" value="Genomic_DNA"/>
</dbReference>
<dbReference type="RefSeq" id="XP_015626054.1">
    <property type="nucleotide sequence ID" value="XM_015770568.1"/>
</dbReference>
<dbReference type="SMR" id="Q9AR38"/>
<dbReference type="FunCoup" id="Q9AR38">
    <property type="interactions" value="2187"/>
</dbReference>
<dbReference type="STRING" id="39947.Q9AR38"/>
<dbReference type="ChEMBL" id="CHEMBL2366510"/>
<dbReference type="PaxDb" id="39947-Q9AR38"/>
<dbReference type="EnsemblPlants" id="Os01t0286600-01">
    <property type="protein sequence ID" value="Os01t0286600-01"/>
    <property type="gene ID" value="Os01g0286600"/>
</dbReference>
<dbReference type="Gramene" id="Os01t0286600-01">
    <property type="protein sequence ID" value="Os01t0286600-01"/>
    <property type="gene ID" value="Os01g0286600"/>
</dbReference>
<dbReference type="KEGG" id="dosa:Os01g0286600"/>
<dbReference type="eggNOG" id="KOG1276">
    <property type="taxonomic scope" value="Eukaryota"/>
</dbReference>
<dbReference type="HOGENOM" id="CLU_009629_3_0_1"/>
<dbReference type="InParanoid" id="Q9AR38"/>
<dbReference type="OMA" id="WFDQWFG"/>
<dbReference type="OrthoDB" id="419752at2759"/>
<dbReference type="UniPathway" id="UPA00251">
    <property type="reaction ID" value="UER00324"/>
</dbReference>
<dbReference type="UniPathway" id="UPA00668"/>
<dbReference type="Proteomes" id="UP000000763">
    <property type="component" value="Chromosome 1"/>
</dbReference>
<dbReference type="Proteomes" id="UP000059680">
    <property type="component" value="Chromosome 1"/>
</dbReference>
<dbReference type="GO" id="GO:0009507">
    <property type="term" value="C:chloroplast"/>
    <property type="evidence" value="ECO:0007669"/>
    <property type="project" value="UniProtKB-SubCell"/>
</dbReference>
<dbReference type="GO" id="GO:0050660">
    <property type="term" value="F:flavin adenine dinucleotide binding"/>
    <property type="evidence" value="ECO:0007669"/>
    <property type="project" value="UniProtKB-ARBA"/>
</dbReference>
<dbReference type="GO" id="GO:0004729">
    <property type="term" value="F:oxygen-dependent protoporphyrinogen oxidase activity"/>
    <property type="evidence" value="ECO:0000318"/>
    <property type="project" value="GO_Central"/>
</dbReference>
<dbReference type="GO" id="GO:0015995">
    <property type="term" value="P:chlorophyll biosynthetic process"/>
    <property type="evidence" value="ECO:0007669"/>
    <property type="project" value="UniProtKB-UniPathway"/>
</dbReference>
<dbReference type="GO" id="GO:0006782">
    <property type="term" value="P:protoporphyrinogen IX biosynthetic process"/>
    <property type="evidence" value="ECO:0007669"/>
    <property type="project" value="UniProtKB-UniPathway"/>
</dbReference>
<dbReference type="FunFam" id="1.10.3110.10:FF:000002">
    <property type="entry name" value="Protoporphyrinogen oxidase"/>
    <property type="match status" value="1"/>
</dbReference>
<dbReference type="Gene3D" id="3.50.50.60">
    <property type="entry name" value="FAD/NAD(P)-binding domain"/>
    <property type="match status" value="1"/>
</dbReference>
<dbReference type="Gene3D" id="1.10.3110.10">
    <property type="entry name" value="protoporphyrinogen ix oxidase, domain 3"/>
    <property type="match status" value="1"/>
</dbReference>
<dbReference type="Gene3D" id="3.90.660.20">
    <property type="entry name" value="Protoporphyrinogen oxidase, mitochondrial, domain 2"/>
    <property type="match status" value="1"/>
</dbReference>
<dbReference type="InterPro" id="IPR002937">
    <property type="entry name" value="Amino_oxidase"/>
</dbReference>
<dbReference type="InterPro" id="IPR036188">
    <property type="entry name" value="FAD/NAD-bd_sf"/>
</dbReference>
<dbReference type="InterPro" id="IPR004572">
    <property type="entry name" value="Protoporphyrinogen_oxidase"/>
</dbReference>
<dbReference type="InterPro" id="IPR050464">
    <property type="entry name" value="Zeta_carotene_desat/Oxidored"/>
</dbReference>
<dbReference type="NCBIfam" id="TIGR00562">
    <property type="entry name" value="proto_IX_ox"/>
    <property type="match status" value="1"/>
</dbReference>
<dbReference type="PANTHER" id="PTHR42923">
    <property type="entry name" value="PROTOPORPHYRINOGEN OXIDASE"/>
    <property type="match status" value="1"/>
</dbReference>
<dbReference type="PANTHER" id="PTHR42923:SF3">
    <property type="entry name" value="PROTOPORPHYRINOGEN OXIDASE"/>
    <property type="match status" value="1"/>
</dbReference>
<dbReference type="Pfam" id="PF01593">
    <property type="entry name" value="Amino_oxidase"/>
    <property type="match status" value="1"/>
</dbReference>
<dbReference type="SUPFAM" id="SSF54373">
    <property type="entry name" value="FAD-linked reductases, C-terminal domain"/>
    <property type="match status" value="1"/>
</dbReference>
<dbReference type="SUPFAM" id="SSF51905">
    <property type="entry name" value="FAD/NAD(P)-binding domain"/>
    <property type="match status" value="1"/>
</dbReference>
<reference key="1">
    <citation type="submission" date="2001-03" db="EMBL/GenBank/DDBJ databases">
        <title>Characterization of a full length protoporphyrinogen oxidase I cDNA from Oryza sativa L.</title>
        <authorList>
            <person name="Ichikawa H."/>
            <person name="Okano E."/>
            <person name="Sugita T."/>
            <person name="Shimizu T."/>
            <person name="Osakabe K."/>
            <person name="Toki S."/>
        </authorList>
    </citation>
    <scope>NUCLEOTIDE SEQUENCE [GENOMIC DNA / MRNA]</scope>
    <source>
        <strain>cv. Nipponbare</strain>
        <tissue>Shoot</tissue>
    </source>
</reference>
<reference key="2">
    <citation type="journal article" date="2002" name="Nature">
        <title>The genome sequence and structure of rice chromosome 1.</title>
        <authorList>
            <person name="Sasaki T."/>
            <person name="Matsumoto T."/>
            <person name="Yamamoto K."/>
            <person name="Sakata K."/>
            <person name="Baba T."/>
            <person name="Katayose Y."/>
            <person name="Wu J."/>
            <person name="Niimura Y."/>
            <person name="Cheng Z."/>
            <person name="Nagamura Y."/>
            <person name="Antonio B.A."/>
            <person name="Kanamori H."/>
            <person name="Hosokawa S."/>
            <person name="Masukawa M."/>
            <person name="Arikawa K."/>
            <person name="Chiden Y."/>
            <person name="Hayashi M."/>
            <person name="Okamoto M."/>
            <person name="Ando T."/>
            <person name="Aoki H."/>
            <person name="Arita K."/>
            <person name="Hamada M."/>
            <person name="Harada C."/>
            <person name="Hijishita S."/>
            <person name="Honda M."/>
            <person name="Ichikawa Y."/>
            <person name="Idonuma A."/>
            <person name="Iijima M."/>
            <person name="Ikeda M."/>
            <person name="Ikeno M."/>
            <person name="Ito S."/>
            <person name="Ito T."/>
            <person name="Ito Y."/>
            <person name="Ito Y."/>
            <person name="Iwabuchi A."/>
            <person name="Kamiya K."/>
            <person name="Karasawa W."/>
            <person name="Katagiri S."/>
            <person name="Kikuta A."/>
            <person name="Kobayashi N."/>
            <person name="Kono I."/>
            <person name="Machita K."/>
            <person name="Maehara T."/>
            <person name="Mizuno H."/>
            <person name="Mizubayashi T."/>
            <person name="Mukai Y."/>
            <person name="Nagasaki H."/>
            <person name="Nakashima M."/>
            <person name="Nakama Y."/>
            <person name="Nakamichi Y."/>
            <person name="Nakamura M."/>
            <person name="Namiki N."/>
            <person name="Negishi M."/>
            <person name="Ohta I."/>
            <person name="Ono N."/>
            <person name="Saji S."/>
            <person name="Sakai K."/>
            <person name="Shibata M."/>
            <person name="Shimokawa T."/>
            <person name="Shomura A."/>
            <person name="Song J."/>
            <person name="Takazaki Y."/>
            <person name="Terasawa K."/>
            <person name="Tsuji K."/>
            <person name="Waki K."/>
            <person name="Yamagata H."/>
            <person name="Yamane H."/>
            <person name="Yoshiki S."/>
            <person name="Yoshihara R."/>
            <person name="Yukawa K."/>
            <person name="Zhong H."/>
            <person name="Iwama H."/>
            <person name="Endo T."/>
            <person name="Ito H."/>
            <person name="Hahn J.H."/>
            <person name="Kim H.-I."/>
            <person name="Eun M.-Y."/>
            <person name="Yano M."/>
            <person name="Jiang J."/>
            <person name="Gojobori T."/>
        </authorList>
    </citation>
    <scope>NUCLEOTIDE SEQUENCE [LARGE SCALE GENOMIC DNA]</scope>
    <source>
        <strain>cv. Nipponbare</strain>
    </source>
</reference>
<reference key="3">
    <citation type="journal article" date="2005" name="Nature">
        <title>The map-based sequence of the rice genome.</title>
        <authorList>
            <consortium name="International rice genome sequencing project (IRGSP)"/>
        </authorList>
    </citation>
    <scope>NUCLEOTIDE SEQUENCE [LARGE SCALE GENOMIC DNA]</scope>
    <source>
        <strain>cv. Nipponbare</strain>
    </source>
</reference>
<reference key="4">
    <citation type="journal article" date="2008" name="Nucleic Acids Res.">
        <title>The rice annotation project database (RAP-DB): 2008 update.</title>
        <authorList>
            <consortium name="The rice annotation project (RAP)"/>
        </authorList>
    </citation>
    <scope>GENOME REANNOTATION</scope>
    <source>
        <strain>cv. Nipponbare</strain>
    </source>
</reference>
<reference key="5">
    <citation type="journal article" date="2013" name="Rice">
        <title>Improvement of the Oryza sativa Nipponbare reference genome using next generation sequence and optical map data.</title>
        <authorList>
            <person name="Kawahara Y."/>
            <person name="de la Bastide M."/>
            <person name="Hamilton J.P."/>
            <person name="Kanamori H."/>
            <person name="McCombie W.R."/>
            <person name="Ouyang S."/>
            <person name="Schwartz D.C."/>
            <person name="Tanaka T."/>
            <person name="Wu J."/>
            <person name="Zhou S."/>
            <person name="Childs K.L."/>
            <person name="Davidson R.M."/>
            <person name="Lin H."/>
            <person name="Quesada-Ocampo L."/>
            <person name="Vaillancourt B."/>
            <person name="Sakai H."/>
            <person name="Lee S.S."/>
            <person name="Kim J."/>
            <person name="Numa H."/>
            <person name="Itoh T."/>
            <person name="Buell C.R."/>
            <person name="Matsumoto T."/>
        </authorList>
    </citation>
    <scope>GENOME REANNOTATION</scope>
    <source>
        <strain>cv. Nipponbare</strain>
    </source>
</reference>
<comment type="function">
    <text>Catalyzes the 6-electron oxidation of protoporphyrinogen-IX to form protoporphyrin-IX.</text>
</comment>
<comment type="catalytic activity">
    <reaction>
        <text>protoporphyrinogen IX + 3 O2 = protoporphyrin IX + 3 H2O2</text>
        <dbReference type="Rhea" id="RHEA:25576"/>
        <dbReference type="ChEBI" id="CHEBI:15379"/>
        <dbReference type="ChEBI" id="CHEBI:16240"/>
        <dbReference type="ChEBI" id="CHEBI:57306"/>
        <dbReference type="ChEBI" id="CHEBI:57307"/>
        <dbReference type="EC" id="1.3.3.4"/>
    </reaction>
</comment>
<comment type="cofactor">
    <cofactor evidence="1">
        <name>FAD</name>
        <dbReference type="ChEBI" id="CHEBI:57692"/>
    </cofactor>
    <text evidence="1">Binds 1 FAD per subunit.</text>
</comment>
<comment type="pathway">
    <text>Porphyrin-containing compound metabolism; protoporphyrin-IX biosynthesis; protoporphyrin-IX from protoporphyrinogen-IX: step 1/1.</text>
</comment>
<comment type="pathway">
    <text>Porphyrin-containing compound metabolism; chlorophyll biosynthesis.</text>
</comment>
<comment type="subcellular location">
    <subcellularLocation>
        <location evidence="4">Plastid</location>
        <location evidence="4">Chloroplast</location>
    </subcellularLocation>
</comment>
<comment type="similarity">
    <text evidence="4">Belongs to the protoporphyrinogen/coproporphyrinogen oxidase family. Protoporphyrinogen oxidase subfamily.</text>
</comment>
<comment type="sequence caution" evidence="4">
    <conflict type="erroneous gene model prediction">
        <sequence resource="EMBL-CDS" id="BAD81569"/>
    </conflict>
</comment>
<feature type="transit peptide" description="Chloroplast" evidence="2">
    <location>
        <begin position="1"/>
        <end position="36"/>
    </location>
</feature>
<feature type="chain" id="PRO_0000376074" description="Protoporphyrinogen oxidase, chloroplastic">
    <location>
        <begin position="37"/>
        <end position="536"/>
    </location>
</feature>
<feature type="region of interest" description="Disordered" evidence="3">
    <location>
        <begin position="248"/>
        <end position="272"/>
    </location>
</feature>
<feature type="compositionally biased region" description="Basic and acidic residues" evidence="3">
    <location>
        <begin position="252"/>
        <end position="266"/>
    </location>
</feature>
<feature type="binding site" evidence="1">
    <location>
        <begin position="62"/>
        <end position="67"/>
    </location>
    <ligand>
        <name>FAD</name>
        <dbReference type="ChEBI" id="CHEBI:57692"/>
    </ligand>
</feature>
<feature type="binding site" evidence="1">
    <location>
        <begin position="87"/>
        <end position="88"/>
    </location>
    <ligand>
        <name>FAD</name>
        <dbReference type="ChEBI" id="CHEBI:57692"/>
    </ligand>
</feature>
<feature type="binding site" evidence="1">
    <location>
        <begin position="111"/>
        <end position="114"/>
    </location>
    <ligand>
        <name>FAD</name>
        <dbReference type="ChEBI" id="CHEBI:57692"/>
    </ligand>
</feature>
<feature type="binding site" evidence="1">
    <location>
        <begin position="510"/>
        <end position="512"/>
    </location>
    <ligand>
        <name>FAD</name>
        <dbReference type="ChEBI" id="CHEBI:57692"/>
    </ligand>
</feature>
<evidence type="ECO:0000250" key="1"/>
<evidence type="ECO:0000255" key="2"/>
<evidence type="ECO:0000256" key="3">
    <source>
        <dbReference type="SAM" id="MobiDB-lite"/>
    </source>
</evidence>
<evidence type="ECO:0000305" key="4"/>
<accession>Q9AR38</accession>
<accession>A0A0P0V168</accession>
<accession>Q5NAD7</accession>
<keyword id="KW-0149">Chlorophyll biosynthesis</keyword>
<keyword id="KW-0150">Chloroplast</keyword>
<keyword id="KW-0274">FAD</keyword>
<keyword id="KW-0285">Flavoprotein</keyword>
<keyword id="KW-0350">Heme biosynthesis</keyword>
<keyword id="KW-0560">Oxidoreductase</keyword>
<keyword id="KW-0934">Plastid</keyword>
<keyword id="KW-0627">Porphyrin biosynthesis</keyword>
<keyword id="KW-1185">Reference proteome</keyword>
<keyword id="KW-0809">Transit peptide</keyword>
<sequence length="536" mass="56727">MAAAAAAMATATSATAAPPLRIRDAARRTRRRGHVRCAVASGAAEAPAAPGARVSADCVVVGGGISGLCTAQALATKHGVGDVLVTEARARPGGNITTAERAGEGYLWEEGPNSFQPSDPVLTMAVDSGLKDDLVFGDPNAPRFVLWEGKLRPVPSKPGDLPFFDLMSIPGKLRAGLGALGVRAPPPGREESVEDFVRRNLGAEVFERLIEPFCSGVYAGDPSKLSMKAAFGKVWRLEDTGGSIIGGTIKTIQERGKNPKPPRDPRLPTPKGQTVASFRKGLTMLPDAITSRLGSKVKLSWKLTSITKSDNKGYALVYETPEGVVSVQAKTVVMTIPSYVASDILRPLSSDAADALSIFYYPPVAAVTVSYPKEAIRKECLIDGELQGFGQLHPRSQGVETLGTIYSSSLFPNRAPAGRVLLLNYIGGSTNTGIVSKTESELVEAVDRDLRKMLINPKAVDPLVLGVRVWPQAIPQFLIGHLDHLEAAKSALGKGGYDGLFLGGNYVAGVALGRCVEGAYESASQISDYLTKYAYK</sequence>
<name>PPOC_ORYSJ</name>
<proteinExistence type="evidence at transcript level"/>